<gene>
    <name evidence="1" type="primary">flgI</name>
    <name type="ordered locus">SARI_01816</name>
</gene>
<protein>
    <recommendedName>
        <fullName evidence="1">Flagellar P-ring protein</fullName>
    </recommendedName>
    <alternativeName>
        <fullName evidence="1">Basal body P-ring protein</fullName>
    </alternativeName>
</protein>
<sequence length="367" mass="38417">MYVFKALAGIVLALVATLAHAERIRDLTSVQGVRENSLIGYGLVVGLDGTGDQTTQTPFTTQTLNNMLSQLGITVPTGTNMQLKNVAAVMVTASYPPFARQGQTIDVVVSSMGNAKSLRGGTLLMTPLKGVDSQVYALAQGNILVGGAGASAGGSSVQVNQLNGGRITNGAIIERELPSQFGAGNTINLQLNDEDFTMAQQITDAINRARGYGSATALDARTVQVRVPSGNSSQVRFLADIQNMEVNVTPQDAKVVINSRTGSVVMNREVTLDSCAVAQGNLSVTVNRQLNVNQPNTPFGGGQTVVTPQTQIDLRQSGGSLQSVRSSANLNSVVRALNALGATPMDLMSILQSMQSAGCLRAKLEII</sequence>
<reference key="1">
    <citation type="submission" date="2007-11" db="EMBL/GenBank/DDBJ databases">
        <authorList>
            <consortium name="The Salmonella enterica serovar Arizonae Genome Sequencing Project"/>
            <person name="McClelland M."/>
            <person name="Sanderson E.K."/>
            <person name="Porwollik S."/>
            <person name="Spieth J."/>
            <person name="Clifton W.S."/>
            <person name="Fulton R."/>
            <person name="Chunyan W."/>
            <person name="Wollam A."/>
            <person name="Shah N."/>
            <person name="Pepin K."/>
            <person name="Bhonagiri V."/>
            <person name="Nash W."/>
            <person name="Johnson M."/>
            <person name="Thiruvilangam P."/>
            <person name="Wilson R."/>
        </authorList>
    </citation>
    <scope>NUCLEOTIDE SEQUENCE [LARGE SCALE GENOMIC DNA]</scope>
    <source>
        <strain>ATCC BAA-731 / CDC346-86 / RSK2980</strain>
    </source>
</reference>
<proteinExistence type="inferred from homology"/>
<evidence type="ECO:0000255" key="1">
    <source>
        <dbReference type="HAMAP-Rule" id="MF_00416"/>
    </source>
</evidence>
<name>FLGI_SALAR</name>
<dbReference type="EMBL" id="CP000880">
    <property type="protein sequence ID" value="ABX21701.1"/>
    <property type="molecule type" value="Genomic_DNA"/>
</dbReference>
<dbReference type="SMR" id="A9MGD9"/>
<dbReference type="STRING" id="41514.SARI_01816"/>
<dbReference type="KEGG" id="ses:SARI_01816"/>
<dbReference type="HOGENOM" id="CLU_045235_1_0_6"/>
<dbReference type="Proteomes" id="UP000002084">
    <property type="component" value="Chromosome"/>
</dbReference>
<dbReference type="GO" id="GO:0009428">
    <property type="term" value="C:bacterial-type flagellum basal body, distal rod, P ring"/>
    <property type="evidence" value="ECO:0007669"/>
    <property type="project" value="InterPro"/>
</dbReference>
<dbReference type="GO" id="GO:0030288">
    <property type="term" value="C:outer membrane-bounded periplasmic space"/>
    <property type="evidence" value="ECO:0007669"/>
    <property type="project" value="InterPro"/>
</dbReference>
<dbReference type="GO" id="GO:0005198">
    <property type="term" value="F:structural molecule activity"/>
    <property type="evidence" value="ECO:0007669"/>
    <property type="project" value="InterPro"/>
</dbReference>
<dbReference type="GO" id="GO:0071973">
    <property type="term" value="P:bacterial-type flagellum-dependent cell motility"/>
    <property type="evidence" value="ECO:0007669"/>
    <property type="project" value="InterPro"/>
</dbReference>
<dbReference type="HAMAP" id="MF_00416">
    <property type="entry name" value="FlgI"/>
    <property type="match status" value="1"/>
</dbReference>
<dbReference type="InterPro" id="IPR001782">
    <property type="entry name" value="Flag_FlgI"/>
</dbReference>
<dbReference type="NCBIfam" id="NF003676">
    <property type="entry name" value="PRK05303.1"/>
    <property type="match status" value="1"/>
</dbReference>
<dbReference type="PANTHER" id="PTHR30381">
    <property type="entry name" value="FLAGELLAR P-RING PERIPLASMIC PROTEIN FLGI"/>
    <property type="match status" value="1"/>
</dbReference>
<dbReference type="PANTHER" id="PTHR30381:SF0">
    <property type="entry name" value="FLAGELLAR P-RING PROTEIN"/>
    <property type="match status" value="1"/>
</dbReference>
<dbReference type="Pfam" id="PF02119">
    <property type="entry name" value="FlgI"/>
    <property type="match status" value="1"/>
</dbReference>
<dbReference type="PRINTS" id="PR01010">
    <property type="entry name" value="FLGPRINGFLGI"/>
</dbReference>
<feature type="signal peptide" evidence="1">
    <location>
        <begin position="1"/>
        <end position="21"/>
    </location>
</feature>
<feature type="chain" id="PRO_1000080512" description="Flagellar P-ring protein">
    <location>
        <begin position="22"/>
        <end position="367"/>
    </location>
</feature>
<comment type="function">
    <text evidence="1">Assembles around the rod to form the L-ring and probably protects the motor/basal body from shearing forces during rotation.</text>
</comment>
<comment type="subunit">
    <text evidence="1">The basal body constitutes a major portion of the flagellar organelle and consists of four rings (L,P,S, and M) mounted on a central rod.</text>
</comment>
<comment type="subcellular location">
    <subcellularLocation>
        <location evidence="1">Periplasm</location>
    </subcellularLocation>
    <subcellularLocation>
        <location evidence="1">Bacterial flagellum basal body</location>
    </subcellularLocation>
</comment>
<comment type="similarity">
    <text evidence="1">Belongs to the FlgI family.</text>
</comment>
<accession>A9MGD9</accession>
<keyword id="KW-0975">Bacterial flagellum</keyword>
<keyword id="KW-0574">Periplasm</keyword>
<keyword id="KW-1185">Reference proteome</keyword>
<keyword id="KW-0732">Signal</keyword>
<organism>
    <name type="scientific">Salmonella arizonae (strain ATCC BAA-731 / CDC346-86 / RSK2980)</name>
    <dbReference type="NCBI Taxonomy" id="41514"/>
    <lineage>
        <taxon>Bacteria</taxon>
        <taxon>Pseudomonadati</taxon>
        <taxon>Pseudomonadota</taxon>
        <taxon>Gammaproteobacteria</taxon>
        <taxon>Enterobacterales</taxon>
        <taxon>Enterobacteriaceae</taxon>
        <taxon>Salmonella</taxon>
    </lineage>
</organism>